<dbReference type="EC" id="6.3.5.7" evidence="1"/>
<dbReference type="EMBL" id="CP001147">
    <property type="protein sequence ID" value="ACI22088.1"/>
    <property type="molecule type" value="Genomic_DNA"/>
</dbReference>
<dbReference type="RefSeq" id="WP_012546781.1">
    <property type="nucleotide sequence ID" value="NC_011296.1"/>
</dbReference>
<dbReference type="RefSeq" id="YP_002248974.1">
    <property type="nucleotide sequence ID" value="NC_011296.1"/>
</dbReference>
<dbReference type="SMR" id="B5YL59"/>
<dbReference type="STRING" id="289376.THEYE_A1150"/>
<dbReference type="EnsemblBacteria" id="ACI22088">
    <property type="protein sequence ID" value="ACI22088"/>
    <property type="gene ID" value="THEYE_A1150"/>
</dbReference>
<dbReference type="KEGG" id="tye:THEYE_A1150"/>
<dbReference type="PATRIC" id="fig|289376.4.peg.1128"/>
<dbReference type="eggNOG" id="COG0154">
    <property type="taxonomic scope" value="Bacteria"/>
</dbReference>
<dbReference type="HOGENOM" id="CLU_009600_0_3_0"/>
<dbReference type="InParanoid" id="B5YL59"/>
<dbReference type="OrthoDB" id="9811471at2"/>
<dbReference type="Proteomes" id="UP000000718">
    <property type="component" value="Chromosome"/>
</dbReference>
<dbReference type="GO" id="GO:0030956">
    <property type="term" value="C:glutamyl-tRNA(Gln) amidotransferase complex"/>
    <property type="evidence" value="ECO:0007669"/>
    <property type="project" value="InterPro"/>
</dbReference>
<dbReference type="GO" id="GO:0005524">
    <property type="term" value="F:ATP binding"/>
    <property type="evidence" value="ECO:0007669"/>
    <property type="project" value="UniProtKB-KW"/>
</dbReference>
<dbReference type="GO" id="GO:0050567">
    <property type="term" value="F:glutaminyl-tRNA synthase (glutamine-hydrolyzing) activity"/>
    <property type="evidence" value="ECO:0007669"/>
    <property type="project" value="UniProtKB-UniRule"/>
</dbReference>
<dbReference type="GO" id="GO:0006412">
    <property type="term" value="P:translation"/>
    <property type="evidence" value="ECO:0007669"/>
    <property type="project" value="UniProtKB-UniRule"/>
</dbReference>
<dbReference type="Gene3D" id="3.90.1300.10">
    <property type="entry name" value="Amidase signature (AS) domain"/>
    <property type="match status" value="1"/>
</dbReference>
<dbReference type="HAMAP" id="MF_00120">
    <property type="entry name" value="GatA"/>
    <property type="match status" value="1"/>
</dbReference>
<dbReference type="InterPro" id="IPR000120">
    <property type="entry name" value="Amidase"/>
</dbReference>
<dbReference type="InterPro" id="IPR020556">
    <property type="entry name" value="Amidase_CS"/>
</dbReference>
<dbReference type="InterPro" id="IPR023631">
    <property type="entry name" value="Amidase_dom"/>
</dbReference>
<dbReference type="InterPro" id="IPR036928">
    <property type="entry name" value="AS_sf"/>
</dbReference>
<dbReference type="InterPro" id="IPR004412">
    <property type="entry name" value="GatA"/>
</dbReference>
<dbReference type="NCBIfam" id="TIGR00132">
    <property type="entry name" value="gatA"/>
    <property type="match status" value="1"/>
</dbReference>
<dbReference type="PANTHER" id="PTHR11895:SF151">
    <property type="entry name" value="GLUTAMYL-TRNA(GLN) AMIDOTRANSFERASE SUBUNIT A"/>
    <property type="match status" value="1"/>
</dbReference>
<dbReference type="PANTHER" id="PTHR11895">
    <property type="entry name" value="TRANSAMIDASE"/>
    <property type="match status" value="1"/>
</dbReference>
<dbReference type="Pfam" id="PF01425">
    <property type="entry name" value="Amidase"/>
    <property type="match status" value="1"/>
</dbReference>
<dbReference type="SUPFAM" id="SSF75304">
    <property type="entry name" value="Amidase signature (AS) enzymes"/>
    <property type="match status" value="1"/>
</dbReference>
<dbReference type="PROSITE" id="PS00571">
    <property type="entry name" value="AMIDASES"/>
    <property type="match status" value="1"/>
</dbReference>
<sequence length="484" mass="52963">MELNKLKLTELVPLISKGEVRPHEIIIDVFKRVQEVEGKVKAYITLTVEKAYDMAREAENAIFSGKKSLLTGIPIAVKDNICTKGILTTCASKILYNFYPPYESTVTSKLLNNKYILIGKTNMDEFAMGSSTENSGFHVTKNPWDLERVPGGSSGGSAAAVAADECIAALGSDTGGSIRQPASFCGVVGLKPTYGRVSRFGLVAFASSLDQIGPITKCVADAALLMNVISGHDPMDSTSAPIESSDFTEYLGKEVKGIKIGIPKEYFIEGMDKEVEERIKDAIKELESLGCIPVEISLPHTEYAVATYYIIATSEASSNLARYDGVKYGLRVQGKDLLEMYMKTRSRGFGTEVKRRIMLGTYSLSAGYYEAYYKKAQQVRTLIKNDFEKAFEKVDFIVTPTAPSPAFKIGEKIDDPLQMYLSDIFTISVNLAGVPAISLPCGFSEKGLPVGLQIIGKPFDEAGILQLAYAYEQSTPWHKMKPLL</sequence>
<comment type="function">
    <text evidence="1">Allows the formation of correctly charged Gln-tRNA(Gln) through the transamidation of misacylated Glu-tRNA(Gln) in organisms which lack glutaminyl-tRNA synthetase. The reaction takes place in the presence of glutamine and ATP through an activated gamma-phospho-Glu-tRNA(Gln).</text>
</comment>
<comment type="catalytic activity">
    <reaction evidence="1">
        <text>L-glutamyl-tRNA(Gln) + L-glutamine + ATP + H2O = L-glutaminyl-tRNA(Gln) + L-glutamate + ADP + phosphate + H(+)</text>
        <dbReference type="Rhea" id="RHEA:17521"/>
        <dbReference type="Rhea" id="RHEA-COMP:9681"/>
        <dbReference type="Rhea" id="RHEA-COMP:9684"/>
        <dbReference type="ChEBI" id="CHEBI:15377"/>
        <dbReference type="ChEBI" id="CHEBI:15378"/>
        <dbReference type="ChEBI" id="CHEBI:29985"/>
        <dbReference type="ChEBI" id="CHEBI:30616"/>
        <dbReference type="ChEBI" id="CHEBI:43474"/>
        <dbReference type="ChEBI" id="CHEBI:58359"/>
        <dbReference type="ChEBI" id="CHEBI:78520"/>
        <dbReference type="ChEBI" id="CHEBI:78521"/>
        <dbReference type="ChEBI" id="CHEBI:456216"/>
        <dbReference type="EC" id="6.3.5.7"/>
    </reaction>
</comment>
<comment type="subunit">
    <text evidence="1">Heterotrimer of A, B and C subunits.</text>
</comment>
<comment type="similarity">
    <text evidence="1">Belongs to the amidase family. GatA subfamily.</text>
</comment>
<protein>
    <recommendedName>
        <fullName evidence="1">Glutamyl-tRNA(Gln) amidotransferase subunit A</fullName>
        <shortName evidence="1">Glu-ADT subunit A</shortName>
        <ecNumber evidence="1">6.3.5.7</ecNumber>
    </recommendedName>
</protein>
<feature type="chain" id="PRO_1000095176" description="Glutamyl-tRNA(Gln) amidotransferase subunit A">
    <location>
        <begin position="1"/>
        <end position="484"/>
    </location>
</feature>
<feature type="active site" description="Charge relay system" evidence="1">
    <location>
        <position position="78"/>
    </location>
</feature>
<feature type="active site" description="Charge relay system" evidence="1">
    <location>
        <position position="153"/>
    </location>
</feature>
<feature type="active site" description="Acyl-ester intermediate" evidence="1">
    <location>
        <position position="177"/>
    </location>
</feature>
<accession>B5YL59</accession>
<organism>
    <name type="scientific">Thermodesulfovibrio yellowstonii (strain ATCC 51303 / DSM 11347 / YP87)</name>
    <dbReference type="NCBI Taxonomy" id="289376"/>
    <lineage>
        <taxon>Bacteria</taxon>
        <taxon>Pseudomonadati</taxon>
        <taxon>Nitrospirota</taxon>
        <taxon>Thermodesulfovibrionia</taxon>
        <taxon>Thermodesulfovibrionales</taxon>
        <taxon>Thermodesulfovibrionaceae</taxon>
        <taxon>Thermodesulfovibrio</taxon>
    </lineage>
</organism>
<gene>
    <name evidence="1" type="primary">gatA</name>
    <name type="ordered locus">THEYE_A1150</name>
</gene>
<proteinExistence type="inferred from homology"/>
<keyword id="KW-0067">ATP-binding</keyword>
<keyword id="KW-0436">Ligase</keyword>
<keyword id="KW-0547">Nucleotide-binding</keyword>
<keyword id="KW-0648">Protein biosynthesis</keyword>
<keyword id="KW-1185">Reference proteome</keyword>
<evidence type="ECO:0000255" key="1">
    <source>
        <dbReference type="HAMAP-Rule" id="MF_00120"/>
    </source>
</evidence>
<reference key="1">
    <citation type="submission" date="2008-08" db="EMBL/GenBank/DDBJ databases">
        <title>The complete genome sequence of Thermodesulfovibrio yellowstonii strain ATCC 51303 / DSM 11347 / YP87.</title>
        <authorList>
            <person name="Dodson R.J."/>
            <person name="Durkin A.S."/>
            <person name="Wu M."/>
            <person name="Eisen J."/>
            <person name="Sutton G."/>
        </authorList>
    </citation>
    <scope>NUCLEOTIDE SEQUENCE [LARGE SCALE GENOMIC DNA]</scope>
    <source>
        <strain>ATCC 51303 / DSM 11347 / YP87</strain>
    </source>
</reference>
<name>GATA_THEYD</name>